<accession>A6LKP0</accession>
<name>TSAD_THEM4</name>
<comment type="function">
    <text evidence="1">Required for the formation of a threonylcarbamoyl group on adenosine at position 37 (t(6)A37) in tRNAs that read codons beginning with adenine. Is involved in the transfer of the threonylcarbamoyl moiety of threonylcarbamoyl-AMP (TC-AMP) to the N6 group of A37, together with TsaE and TsaB. TsaD likely plays a direct catalytic role in this reaction.</text>
</comment>
<comment type="catalytic activity">
    <reaction evidence="1">
        <text>L-threonylcarbamoyladenylate + adenosine(37) in tRNA = N(6)-L-threonylcarbamoyladenosine(37) in tRNA + AMP + H(+)</text>
        <dbReference type="Rhea" id="RHEA:37059"/>
        <dbReference type="Rhea" id="RHEA-COMP:10162"/>
        <dbReference type="Rhea" id="RHEA-COMP:10163"/>
        <dbReference type="ChEBI" id="CHEBI:15378"/>
        <dbReference type="ChEBI" id="CHEBI:73682"/>
        <dbReference type="ChEBI" id="CHEBI:74411"/>
        <dbReference type="ChEBI" id="CHEBI:74418"/>
        <dbReference type="ChEBI" id="CHEBI:456215"/>
        <dbReference type="EC" id="2.3.1.234"/>
    </reaction>
</comment>
<comment type="cofactor">
    <cofactor evidence="1">
        <name>Fe(2+)</name>
        <dbReference type="ChEBI" id="CHEBI:29033"/>
    </cofactor>
    <text evidence="1">Binds 1 Fe(2+) ion per subunit.</text>
</comment>
<comment type="subcellular location">
    <subcellularLocation>
        <location evidence="1">Cytoplasm</location>
    </subcellularLocation>
</comment>
<comment type="similarity">
    <text evidence="1">Belongs to the KAE1 / TsaD family.</text>
</comment>
<organism>
    <name type="scientific">Thermosipho melanesiensis (strain DSM 12029 / CIP 104789 / BI429)</name>
    <dbReference type="NCBI Taxonomy" id="391009"/>
    <lineage>
        <taxon>Bacteria</taxon>
        <taxon>Thermotogati</taxon>
        <taxon>Thermotogota</taxon>
        <taxon>Thermotogae</taxon>
        <taxon>Thermotogales</taxon>
        <taxon>Fervidobacteriaceae</taxon>
        <taxon>Thermosipho</taxon>
    </lineage>
</organism>
<proteinExistence type="inferred from homology"/>
<protein>
    <recommendedName>
        <fullName evidence="1">tRNA N6-adenosine threonylcarbamoyltransferase</fullName>
        <ecNumber evidence="1">2.3.1.234</ecNumber>
    </recommendedName>
    <alternativeName>
        <fullName evidence="1">N6-L-threonylcarbamoyladenine synthase</fullName>
        <shortName evidence="1">t(6)A synthase</shortName>
    </alternativeName>
    <alternativeName>
        <fullName evidence="1">t(6)A37 threonylcarbamoyladenosine biosynthesis protein TsaD</fullName>
    </alternativeName>
    <alternativeName>
        <fullName evidence="1">tRNA threonylcarbamoyladenosine biosynthesis protein TsaD</fullName>
    </alternativeName>
</protein>
<reference key="1">
    <citation type="submission" date="2007-05" db="EMBL/GenBank/DDBJ databases">
        <title>Complete sequence of Thermosipho melanesiensis BI429.</title>
        <authorList>
            <consortium name="US DOE Joint Genome Institute"/>
            <person name="Copeland A."/>
            <person name="Lucas S."/>
            <person name="Lapidus A."/>
            <person name="Barry K."/>
            <person name="Glavina del Rio T."/>
            <person name="Dalin E."/>
            <person name="Tice H."/>
            <person name="Pitluck S."/>
            <person name="Chertkov O."/>
            <person name="Brettin T."/>
            <person name="Bruce D."/>
            <person name="Detter J.C."/>
            <person name="Han C."/>
            <person name="Schmutz J."/>
            <person name="Larimer F."/>
            <person name="Land M."/>
            <person name="Hauser L."/>
            <person name="Kyrpides N."/>
            <person name="Mikhailova N."/>
            <person name="Nelson K."/>
            <person name="Gogarten J.P."/>
            <person name="Noll K."/>
            <person name="Richardson P."/>
        </authorList>
    </citation>
    <scope>NUCLEOTIDE SEQUENCE [LARGE SCALE GENOMIC DNA]</scope>
    <source>
        <strain>DSM 12029 / CIP 104789 / BI429</strain>
    </source>
</reference>
<feature type="chain" id="PRO_1000024461" description="tRNA N6-adenosine threonylcarbamoyltransferase">
    <location>
        <begin position="1"/>
        <end position="325"/>
    </location>
</feature>
<feature type="binding site" evidence="1">
    <location>
        <position position="110"/>
    </location>
    <ligand>
        <name>Fe cation</name>
        <dbReference type="ChEBI" id="CHEBI:24875"/>
    </ligand>
</feature>
<feature type="binding site" evidence="1">
    <location>
        <position position="114"/>
    </location>
    <ligand>
        <name>Fe cation</name>
        <dbReference type="ChEBI" id="CHEBI:24875"/>
    </ligand>
</feature>
<feature type="binding site" evidence="1">
    <location>
        <begin position="133"/>
        <end position="137"/>
    </location>
    <ligand>
        <name>substrate</name>
    </ligand>
</feature>
<feature type="binding site" evidence="1">
    <location>
        <position position="165"/>
    </location>
    <ligand>
        <name>substrate</name>
    </ligand>
</feature>
<feature type="binding site" evidence="1">
    <location>
        <position position="178"/>
    </location>
    <ligand>
        <name>substrate</name>
    </ligand>
</feature>
<feature type="binding site" evidence="1">
    <location>
        <position position="268"/>
    </location>
    <ligand>
        <name>substrate</name>
    </ligand>
</feature>
<feature type="binding site" evidence="1">
    <location>
        <position position="296"/>
    </location>
    <ligand>
        <name>Fe cation</name>
        <dbReference type="ChEBI" id="CHEBI:24875"/>
    </ligand>
</feature>
<sequence length="325" mass="35154">MIVLGIETSCDETAVAVLENEKILSSVVSSQIDVHKKFGGVVPEIAARHHLSNLPVVFKNALSQAKISLNDIDLISVTYGPGLIGALLVGISFAKGLSLKLNKPLIGINHIVGHVYANYLTYPNLKPPFIVLMVSGGHTEILHIQNEKIEVLGKTLDDAAGEAFDKVARILGLGYPGGPEIEKIAQYGNDKAFNFPKPLYDSKDYNFSFSGLKTAVLYTIKKLDKIPKEDVAASFQRAVTDILLHKTFKAAKDKKINTVVLAGGVAANKYLRTKALEISKKEGIILLIPPIEFCTDNAAMIAIAGYKLFDGTSDLNIDAMPNLNL</sequence>
<dbReference type="EC" id="2.3.1.234" evidence="1"/>
<dbReference type="EMBL" id="CP000716">
    <property type="protein sequence ID" value="ABR30491.1"/>
    <property type="molecule type" value="Genomic_DNA"/>
</dbReference>
<dbReference type="RefSeq" id="WP_012056852.1">
    <property type="nucleotide sequence ID" value="NC_009616.1"/>
</dbReference>
<dbReference type="SMR" id="A6LKP0"/>
<dbReference type="STRING" id="391009.Tmel_0627"/>
<dbReference type="KEGG" id="tme:Tmel_0627"/>
<dbReference type="eggNOG" id="COG0533">
    <property type="taxonomic scope" value="Bacteria"/>
</dbReference>
<dbReference type="HOGENOM" id="CLU_023208_0_2_0"/>
<dbReference type="OrthoDB" id="9806197at2"/>
<dbReference type="Proteomes" id="UP000001110">
    <property type="component" value="Chromosome"/>
</dbReference>
<dbReference type="GO" id="GO:0005737">
    <property type="term" value="C:cytoplasm"/>
    <property type="evidence" value="ECO:0007669"/>
    <property type="project" value="UniProtKB-SubCell"/>
</dbReference>
<dbReference type="GO" id="GO:0005506">
    <property type="term" value="F:iron ion binding"/>
    <property type="evidence" value="ECO:0007669"/>
    <property type="project" value="UniProtKB-UniRule"/>
</dbReference>
<dbReference type="GO" id="GO:0061711">
    <property type="term" value="F:N(6)-L-threonylcarbamoyladenine synthase activity"/>
    <property type="evidence" value="ECO:0007669"/>
    <property type="project" value="UniProtKB-EC"/>
</dbReference>
<dbReference type="GO" id="GO:0002949">
    <property type="term" value="P:tRNA threonylcarbamoyladenosine modification"/>
    <property type="evidence" value="ECO:0007669"/>
    <property type="project" value="UniProtKB-UniRule"/>
</dbReference>
<dbReference type="CDD" id="cd24133">
    <property type="entry name" value="ASKHA_NBD_TsaD_bac"/>
    <property type="match status" value="1"/>
</dbReference>
<dbReference type="FunFam" id="3.30.420.40:FF:000012">
    <property type="entry name" value="tRNA N6-adenosine threonylcarbamoyltransferase"/>
    <property type="match status" value="1"/>
</dbReference>
<dbReference type="FunFam" id="3.30.420.40:FF:000040">
    <property type="entry name" value="tRNA N6-adenosine threonylcarbamoyltransferase"/>
    <property type="match status" value="1"/>
</dbReference>
<dbReference type="Gene3D" id="3.30.420.40">
    <property type="match status" value="2"/>
</dbReference>
<dbReference type="HAMAP" id="MF_01445">
    <property type="entry name" value="TsaD"/>
    <property type="match status" value="1"/>
</dbReference>
<dbReference type="InterPro" id="IPR043129">
    <property type="entry name" value="ATPase_NBD"/>
</dbReference>
<dbReference type="InterPro" id="IPR000905">
    <property type="entry name" value="Gcp-like_dom"/>
</dbReference>
<dbReference type="InterPro" id="IPR017861">
    <property type="entry name" value="KAE1/TsaD"/>
</dbReference>
<dbReference type="InterPro" id="IPR017860">
    <property type="entry name" value="Peptidase_M22_CS"/>
</dbReference>
<dbReference type="InterPro" id="IPR022450">
    <property type="entry name" value="TsaD"/>
</dbReference>
<dbReference type="NCBIfam" id="TIGR00329">
    <property type="entry name" value="gcp_kae1"/>
    <property type="match status" value="1"/>
</dbReference>
<dbReference type="NCBIfam" id="TIGR03723">
    <property type="entry name" value="T6A_TsaD_YgjD"/>
    <property type="match status" value="1"/>
</dbReference>
<dbReference type="PANTHER" id="PTHR11735">
    <property type="entry name" value="TRNA N6-ADENOSINE THREONYLCARBAMOYLTRANSFERASE"/>
    <property type="match status" value="1"/>
</dbReference>
<dbReference type="PANTHER" id="PTHR11735:SF6">
    <property type="entry name" value="TRNA N6-ADENOSINE THREONYLCARBAMOYLTRANSFERASE, MITOCHONDRIAL"/>
    <property type="match status" value="1"/>
</dbReference>
<dbReference type="Pfam" id="PF00814">
    <property type="entry name" value="TsaD"/>
    <property type="match status" value="1"/>
</dbReference>
<dbReference type="PRINTS" id="PR00789">
    <property type="entry name" value="OSIALOPTASE"/>
</dbReference>
<dbReference type="SUPFAM" id="SSF53067">
    <property type="entry name" value="Actin-like ATPase domain"/>
    <property type="match status" value="2"/>
</dbReference>
<dbReference type="PROSITE" id="PS01016">
    <property type="entry name" value="GLYCOPROTEASE"/>
    <property type="match status" value="1"/>
</dbReference>
<keyword id="KW-0012">Acyltransferase</keyword>
<keyword id="KW-0963">Cytoplasm</keyword>
<keyword id="KW-0408">Iron</keyword>
<keyword id="KW-0479">Metal-binding</keyword>
<keyword id="KW-0808">Transferase</keyword>
<keyword id="KW-0819">tRNA processing</keyword>
<evidence type="ECO:0000255" key="1">
    <source>
        <dbReference type="HAMAP-Rule" id="MF_01445"/>
    </source>
</evidence>
<gene>
    <name evidence="1" type="primary">tsaD</name>
    <name type="synonym">gcp</name>
    <name type="ordered locus">Tmel_0627</name>
</gene>